<reference key="1">
    <citation type="journal article" date="2007" name="PLoS Genet.">
        <title>The complete genome sequence of Yersinia pseudotuberculosis IP31758, the causative agent of Far East scarlet-like fever.</title>
        <authorList>
            <person name="Eppinger M."/>
            <person name="Rosovitz M.J."/>
            <person name="Fricke W.F."/>
            <person name="Rasko D.A."/>
            <person name="Kokorina G."/>
            <person name="Fayolle C."/>
            <person name="Lindler L.E."/>
            <person name="Carniel E."/>
            <person name="Ravel J."/>
        </authorList>
    </citation>
    <scope>NUCLEOTIDE SEQUENCE [LARGE SCALE GENOMIC DNA]</scope>
    <source>
        <strain>IP 31758</strain>
    </source>
</reference>
<sequence>MDKLLDRFFNYVSFDTQAKANVKSVPSTQGQRKLAQALQQELLTLGFSHVTLSDHGCVMATLPANVSWPVPTIGFIAHLDTSPDFSGKNVNPQIVENYRGGDIALGIGDEVLSPVMFPVLHQLLGHTLITTDGKTLLGADDKAGIAEIITAMVRLKHRNVPHGDIRIAFTPDEEVGKGAQFFNVAEFDAQWAYTVDGGGIGELEFENFNAASVAIKIVGNNVHPGSAKGVMVNALSLATRYHQELPVDETPECTEGYDGFYHLQSIKGTVERAEMHYIVRDFNRDSFEARKKNMVDIAKRVGKGLHRDCYIEIVIDDSYYNMREQIIKHPHIIELAQQAMLDCDITPIMKPIRGGTDGAQLSFKGLPCPNIFTGGYNYHGKHEFITLEGMEKAVAVIMRISELTAKRAKEL</sequence>
<organism>
    <name type="scientific">Yersinia pseudotuberculosis serotype O:1b (strain IP 31758)</name>
    <dbReference type="NCBI Taxonomy" id="349747"/>
    <lineage>
        <taxon>Bacteria</taxon>
        <taxon>Pseudomonadati</taxon>
        <taxon>Pseudomonadota</taxon>
        <taxon>Gammaproteobacteria</taxon>
        <taxon>Enterobacterales</taxon>
        <taxon>Yersiniaceae</taxon>
        <taxon>Yersinia</taxon>
    </lineage>
</organism>
<protein>
    <recommendedName>
        <fullName evidence="1">Peptidase T</fullName>
        <ecNumber evidence="1">3.4.11.4</ecNumber>
    </recommendedName>
    <alternativeName>
        <fullName evidence="1">Aminotripeptidase</fullName>
        <shortName evidence="1">Tripeptidase</shortName>
    </alternativeName>
    <alternativeName>
        <fullName evidence="1">Tripeptide aminopeptidase</fullName>
    </alternativeName>
</protein>
<comment type="function">
    <text evidence="1">Cleaves the N-terminal amino acid of tripeptides.</text>
</comment>
<comment type="catalytic activity">
    <reaction evidence="1">
        <text>Release of the N-terminal residue from a tripeptide.</text>
        <dbReference type="EC" id="3.4.11.4"/>
    </reaction>
</comment>
<comment type="cofactor">
    <cofactor evidence="1">
        <name>Zn(2+)</name>
        <dbReference type="ChEBI" id="CHEBI:29105"/>
    </cofactor>
    <text evidence="1">Binds 2 Zn(2+) ions per subunit.</text>
</comment>
<comment type="subcellular location">
    <subcellularLocation>
        <location evidence="1">Cytoplasm</location>
    </subcellularLocation>
</comment>
<comment type="similarity">
    <text evidence="1">Belongs to the peptidase M20B family.</text>
</comment>
<feature type="chain" id="PRO_1000061097" description="Peptidase T">
    <location>
        <begin position="1"/>
        <end position="411"/>
    </location>
</feature>
<feature type="active site" evidence="1">
    <location>
        <position position="80"/>
    </location>
</feature>
<feature type="active site" description="Proton acceptor" evidence="1">
    <location>
        <position position="173"/>
    </location>
</feature>
<feature type="binding site" evidence="1">
    <location>
        <position position="78"/>
    </location>
    <ligand>
        <name>Zn(2+)</name>
        <dbReference type="ChEBI" id="CHEBI:29105"/>
        <label>1</label>
    </ligand>
</feature>
<feature type="binding site" evidence="1">
    <location>
        <position position="140"/>
    </location>
    <ligand>
        <name>Zn(2+)</name>
        <dbReference type="ChEBI" id="CHEBI:29105"/>
        <label>1</label>
    </ligand>
</feature>
<feature type="binding site" evidence="1">
    <location>
        <position position="140"/>
    </location>
    <ligand>
        <name>Zn(2+)</name>
        <dbReference type="ChEBI" id="CHEBI:29105"/>
        <label>2</label>
    </ligand>
</feature>
<feature type="binding site" evidence="1">
    <location>
        <position position="174"/>
    </location>
    <ligand>
        <name>Zn(2+)</name>
        <dbReference type="ChEBI" id="CHEBI:29105"/>
        <label>2</label>
    </ligand>
</feature>
<feature type="binding site" evidence="1">
    <location>
        <position position="196"/>
    </location>
    <ligand>
        <name>Zn(2+)</name>
        <dbReference type="ChEBI" id="CHEBI:29105"/>
        <label>1</label>
    </ligand>
</feature>
<feature type="binding site" evidence="1">
    <location>
        <position position="379"/>
    </location>
    <ligand>
        <name>Zn(2+)</name>
        <dbReference type="ChEBI" id="CHEBI:29105"/>
        <label>2</label>
    </ligand>
</feature>
<evidence type="ECO:0000255" key="1">
    <source>
        <dbReference type="HAMAP-Rule" id="MF_00550"/>
    </source>
</evidence>
<keyword id="KW-0031">Aminopeptidase</keyword>
<keyword id="KW-0963">Cytoplasm</keyword>
<keyword id="KW-0378">Hydrolase</keyword>
<keyword id="KW-0479">Metal-binding</keyword>
<keyword id="KW-0482">Metalloprotease</keyword>
<keyword id="KW-0645">Protease</keyword>
<keyword id="KW-0862">Zinc</keyword>
<proteinExistence type="inferred from homology"/>
<dbReference type="EC" id="3.4.11.4" evidence="1"/>
<dbReference type="EMBL" id="CP000720">
    <property type="protein sequence ID" value="ABS47632.1"/>
    <property type="molecule type" value="Genomic_DNA"/>
</dbReference>
<dbReference type="RefSeq" id="WP_012104980.1">
    <property type="nucleotide sequence ID" value="NC_009708.1"/>
</dbReference>
<dbReference type="SMR" id="A7FH54"/>
<dbReference type="MEROPS" id="M20.003"/>
<dbReference type="KEGG" id="ypi:YpsIP31758_1605"/>
<dbReference type="HOGENOM" id="CLU_053676_0_0_6"/>
<dbReference type="Proteomes" id="UP000002412">
    <property type="component" value="Chromosome"/>
</dbReference>
<dbReference type="GO" id="GO:0005829">
    <property type="term" value="C:cytosol"/>
    <property type="evidence" value="ECO:0007669"/>
    <property type="project" value="TreeGrafter"/>
</dbReference>
<dbReference type="GO" id="GO:0008237">
    <property type="term" value="F:metallopeptidase activity"/>
    <property type="evidence" value="ECO:0007669"/>
    <property type="project" value="UniProtKB-KW"/>
</dbReference>
<dbReference type="GO" id="GO:0045148">
    <property type="term" value="F:tripeptide aminopeptidase activity"/>
    <property type="evidence" value="ECO:0007669"/>
    <property type="project" value="UniProtKB-UniRule"/>
</dbReference>
<dbReference type="GO" id="GO:0008270">
    <property type="term" value="F:zinc ion binding"/>
    <property type="evidence" value="ECO:0007669"/>
    <property type="project" value="UniProtKB-UniRule"/>
</dbReference>
<dbReference type="GO" id="GO:0043171">
    <property type="term" value="P:peptide catabolic process"/>
    <property type="evidence" value="ECO:0007669"/>
    <property type="project" value="UniProtKB-UniRule"/>
</dbReference>
<dbReference type="GO" id="GO:0006508">
    <property type="term" value="P:proteolysis"/>
    <property type="evidence" value="ECO:0007669"/>
    <property type="project" value="UniProtKB-UniRule"/>
</dbReference>
<dbReference type="CDD" id="cd03892">
    <property type="entry name" value="M20_peptT"/>
    <property type="match status" value="1"/>
</dbReference>
<dbReference type="FunFam" id="3.30.70.360:FF:000002">
    <property type="entry name" value="Peptidase T"/>
    <property type="match status" value="1"/>
</dbReference>
<dbReference type="Gene3D" id="3.30.70.360">
    <property type="match status" value="1"/>
</dbReference>
<dbReference type="Gene3D" id="3.40.630.10">
    <property type="entry name" value="Zn peptidases"/>
    <property type="match status" value="1"/>
</dbReference>
<dbReference type="HAMAP" id="MF_00550">
    <property type="entry name" value="Aminopeptidase_M20"/>
    <property type="match status" value="1"/>
</dbReference>
<dbReference type="InterPro" id="IPR001261">
    <property type="entry name" value="ArgE/DapE_CS"/>
</dbReference>
<dbReference type="InterPro" id="IPR036264">
    <property type="entry name" value="Bact_exopeptidase_dim_dom"/>
</dbReference>
<dbReference type="InterPro" id="IPR002933">
    <property type="entry name" value="Peptidase_M20"/>
</dbReference>
<dbReference type="InterPro" id="IPR011650">
    <property type="entry name" value="Peptidase_M20_dimer"/>
</dbReference>
<dbReference type="InterPro" id="IPR010161">
    <property type="entry name" value="Peptidase_M20B"/>
</dbReference>
<dbReference type="NCBIfam" id="TIGR01882">
    <property type="entry name" value="peptidase-T"/>
    <property type="match status" value="1"/>
</dbReference>
<dbReference type="NCBIfam" id="NF003976">
    <property type="entry name" value="PRK05469.1"/>
    <property type="match status" value="1"/>
</dbReference>
<dbReference type="NCBIfam" id="NF009920">
    <property type="entry name" value="PRK13381.1"/>
    <property type="match status" value="1"/>
</dbReference>
<dbReference type="PANTHER" id="PTHR42994">
    <property type="entry name" value="PEPTIDASE T"/>
    <property type="match status" value="1"/>
</dbReference>
<dbReference type="PANTHER" id="PTHR42994:SF1">
    <property type="entry name" value="PEPTIDASE T"/>
    <property type="match status" value="1"/>
</dbReference>
<dbReference type="Pfam" id="PF07687">
    <property type="entry name" value="M20_dimer"/>
    <property type="match status" value="1"/>
</dbReference>
<dbReference type="Pfam" id="PF01546">
    <property type="entry name" value="Peptidase_M20"/>
    <property type="match status" value="1"/>
</dbReference>
<dbReference type="PIRSF" id="PIRSF037215">
    <property type="entry name" value="Peptidase_M20B"/>
    <property type="match status" value="1"/>
</dbReference>
<dbReference type="SUPFAM" id="SSF55031">
    <property type="entry name" value="Bacterial exopeptidase dimerisation domain"/>
    <property type="match status" value="1"/>
</dbReference>
<dbReference type="SUPFAM" id="SSF53187">
    <property type="entry name" value="Zn-dependent exopeptidases"/>
    <property type="match status" value="1"/>
</dbReference>
<dbReference type="PROSITE" id="PS00758">
    <property type="entry name" value="ARGE_DAPE_CPG2_1"/>
    <property type="match status" value="1"/>
</dbReference>
<dbReference type="PROSITE" id="PS00759">
    <property type="entry name" value="ARGE_DAPE_CPG2_2"/>
    <property type="match status" value="1"/>
</dbReference>
<gene>
    <name evidence="1" type="primary">pepT</name>
    <name type="ordered locus">YpsIP31758_1605</name>
</gene>
<name>PEPT_YERP3</name>
<accession>A7FH54</accession>